<sequence length="427" mass="45111">MQLPTNVSSLRGMIEVPGDKSISHRAVMLGALASGRTVIDHFLPGADCLSTIDCFRKLGVDIRQDGTTVVVEGAGPGGLREPAAVLDVGNSGTTARLLLGILAGQPFHACLVGDESIAKRPMGRVTKPLREMGARIDGREGGNYTPLSIRGGALRPLRYTSPVASAQVKSAILLAGLFADGVTSVAEPHRSRDHTERMVRLFGGEVNVDGLTVSVAGPQRLRGTHIYVPGDISSAAFFLVAGAIVPNSEITLKNVGLNPTRTGIIDVLTQMGADIAIDNVRNEETEPVGDITVRTSTLRAVEIGGDLIPRLIDEIPIIALLATQAEGTTVIKDASELKVKETNRIHTVVTELKKLGADIEATDDGMMIRGKTPLYADGIVVDSHGDHRIGMMLAVAACIAKGTVRLERSEAVAVSYPAFFADLRSLL</sequence>
<accession>Q5KXV5</accession>
<organism>
    <name type="scientific">Geobacillus kaustophilus (strain HTA426)</name>
    <dbReference type="NCBI Taxonomy" id="235909"/>
    <lineage>
        <taxon>Bacteria</taxon>
        <taxon>Bacillati</taxon>
        <taxon>Bacillota</taxon>
        <taxon>Bacilli</taxon>
        <taxon>Bacillales</taxon>
        <taxon>Anoxybacillaceae</taxon>
        <taxon>Geobacillus</taxon>
        <taxon>Geobacillus thermoleovorans group</taxon>
    </lineage>
</organism>
<comment type="function">
    <text evidence="1">Catalyzes the transfer of the enolpyruvyl moiety of phosphoenolpyruvate (PEP) to the 5-hydroxyl of shikimate-3-phosphate (S3P) to produce enolpyruvyl shikimate-3-phosphate and inorganic phosphate.</text>
</comment>
<comment type="catalytic activity">
    <reaction evidence="1">
        <text>3-phosphoshikimate + phosphoenolpyruvate = 5-O-(1-carboxyvinyl)-3-phosphoshikimate + phosphate</text>
        <dbReference type="Rhea" id="RHEA:21256"/>
        <dbReference type="ChEBI" id="CHEBI:43474"/>
        <dbReference type="ChEBI" id="CHEBI:57701"/>
        <dbReference type="ChEBI" id="CHEBI:58702"/>
        <dbReference type="ChEBI" id="CHEBI:145989"/>
        <dbReference type="EC" id="2.5.1.19"/>
    </reaction>
    <physiologicalReaction direction="left-to-right" evidence="1">
        <dbReference type="Rhea" id="RHEA:21257"/>
    </physiologicalReaction>
</comment>
<comment type="pathway">
    <text evidence="1">Metabolic intermediate biosynthesis; chorismate biosynthesis; chorismate from D-erythrose 4-phosphate and phosphoenolpyruvate: step 6/7.</text>
</comment>
<comment type="subunit">
    <text evidence="1">Monomer.</text>
</comment>
<comment type="subcellular location">
    <subcellularLocation>
        <location evidence="1">Cytoplasm</location>
    </subcellularLocation>
</comment>
<comment type="similarity">
    <text evidence="1">Belongs to the EPSP synthase family.</text>
</comment>
<feature type="chain" id="PRO_0000325345" description="3-phosphoshikimate 1-carboxyvinyltransferase">
    <location>
        <begin position="1"/>
        <end position="427"/>
    </location>
</feature>
<feature type="active site" description="Proton acceptor" evidence="1">
    <location>
        <position position="313"/>
    </location>
</feature>
<feature type="binding site" evidence="1">
    <location>
        <position position="20"/>
    </location>
    <ligand>
        <name>3-phosphoshikimate</name>
        <dbReference type="ChEBI" id="CHEBI:145989"/>
    </ligand>
</feature>
<feature type="binding site" evidence="1">
    <location>
        <position position="20"/>
    </location>
    <ligand>
        <name>phosphoenolpyruvate</name>
        <dbReference type="ChEBI" id="CHEBI:58702"/>
    </ligand>
</feature>
<feature type="binding site" evidence="1">
    <location>
        <position position="21"/>
    </location>
    <ligand>
        <name>3-phosphoshikimate</name>
        <dbReference type="ChEBI" id="CHEBI:145989"/>
    </ligand>
</feature>
<feature type="binding site" evidence="1">
    <location>
        <position position="25"/>
    </location>
    <ligand>
        <name>3-phosphoshikimate</name>
        <dbReference type="ChEBI" id="CHEBI:145989"/>
    </ligand>
</feature>
<feature type="binding site" evidence="1">
    <location>
        <position position="92"/>
    </location>
    <ligand>
        <name>phosphoenolpyruvate</name>
        <dbReference type="ChEBI" id="CHEBI:58702"/>
    </ligand>
</feature>
<feature type="binding site" evidence="1">
    <location>
        <position position="120"/>
    </location>
    <ligand>
        <name>phosphoenolpyruvate</name>
        <dbReference type="ChEBI" id="CHEBI:58702"/>
    </ligand>
</feature>
<feature type="binding site" evidence="1">
    <location>
        <position position="165"/>
    </location>
    <ligand>
        <name>3-phosphoshikimate</name>
        <dbReference type="ChEBI" id="CHEBI:145989"/>
    </ligand>
</feature>
<feature type="binding site" evidence="1">
    <location>
        <position position="167"/>
    </location>
    <ligand>
        <name>3-phosphoshikimate</name>
        <dbReference type="ChEBI" id="CHEBI:145989"/>
    </ligand>
</feature>
<feature type="binding site" evidence="1">
    <location>
        <position position="167"/>
    </location>
    <ligand>
        <name>phosphoenolpyruvate</name>
        <dbReference type="ChEBI" id="CHEBI:58702"/>
    </ligand>
</feature>
<feature type="binding site" evidence="1">
    <location>
        <position position="313"/>
    </location>
    <ligand>
        <name>3-phosphoshikimate</name>
        <dbReference type="ChEBI" id="CHEBI:145989"/>
    </ligand>
</feature>
<feature type="binding site" evidence="1">
    <location>
        <position position="340"/>
    </location>
    <ligand>
        <name>3-phosphoshikimate</name>
        <dbReference type="ChEBI" id="CHEBI:145989"/>
    </ligand>
</feature>
<feature type="binding site" evidence="1">
    <location>
        <position position="344"/>
    </location>
    <ligand>
        <name>phosphoenolpyruvate</name>
        <dbReference type="ChEBI" id="CHEBI:58702"/>
    </ligand>
</feature>
<feature type="binding site" evidence="1">
    <location>
        <position position="388"/>
    </location>
    <ligand>
        <name>phosphoenolpyruvate</name>
        <dbReference type="ChEBI" id="CHEBI:58702"/>
    </ligand>
</feature>
<dbReference type="EC" id="2.5.1.19" evidence="1"/>
<dbReference type="EMBL" id="BA000043">
    <property type="protein sequence ID" value="BAD76481.1"/>
    <property type="molecule type" value="Genomic_DNA"/>
</dbReference>
<dbReference type="RefSeq" id="WP_011231681.1">
    <property type="nucleotide sequence ID" value="NC_006510.1"/>
</dbReference>
<dbReference type="SMR" id="Q5KXV5"/>
<dbReference type="STRING" id="235909.GK2196"/>
<dbReference type="KEGG" id="gka:GK2196"/>
<dbReference type="PATRIC" id="fig|235909.7.peg.2351"/>
<dbReference type="eggNOG" id="COG0128">
    <property type="taxonomic scope" value="Bacteria"/>
</dbReference>
<dbReference type="HOGENOM" id="CLU_024321_0_1_9"/>
<dbReference type="UniPathway" id="UPA00053">
    <property type="reaction ID" value="UER00089"/>
</dbReference>
<dbReference type="Proteomes" id="UP000001172">
    <property type="component" value="Chromosome"/>
</dbReference>
<dbReference type="GO" id="GO:0005737">
    <property type="term" value="C:cytoplasm"/>
    <property type="evidence" value="ECO:0007669"/>
    <property type="project" value="UniProtKB-SubCell"/>
</dbReference>
<dbReference type="GO" id="GO:0003866">
    <property type="term" value="F:3-phosphoshikimate 1-carboxyvinyltransferase activity"/>
    <property type="evidence" value="ECO:0007669"/>
    <property type="project" value="UniProtKB-UniRule"/>
</dbReference>
<dbReference type="GO" id="GO:0008652">
    <property type="term" value="P:amino acid biosynthetic process"/>
    <property type="evidence" value="ECO:0007669"/>
    <property type="project" value="UniProtKB-KW"/>
</dbReference>
<dbReference type="GO" id="GO:0009073">
    <property type="term" value="P:aromatic amino acid family biosynthetic process"/>
    <property type="evidence" value="ECO:0007669"/>
    <property type="project" value="UniProtKB-KW"/>
</dbReference>
<dbReference type="GO" id="GO:0009423">
    <property type="term" value="P:chorismate biosynthetic process"/>
    <property type="evidence" value="ECO:0007669"/>
    <property type="project" value="UniProtKB-UniRule"/>
</dbReference>
<dbReference type="CDD" id="cd01556">
    <property type="entry name" value="EPSP_synthase"/>
    <property type="match status" value="1"/>
</dbReference>
<dbReference type="FunFam" id="3.65.10.10:FF:000005">
    <property type="entry name" value="3-phosphoshikimate 1-carboxyvinyltransferase"/>
    <property type="match status" value="1"/>
</dbReference>
<dbReference type="FunFam" id="3.65.10.10:FF:000006">
    <property type="entry name" value="3-phosphoshikimate 1-carboxyvinyltransferase"/>
    <property type="match status" value="1"/>
</dbReference>
<dbReference type="Gene3D" id="3.65.10.10">
    <property type="entry name" value="Enolpyruvate transferase domain"/>
    <property type="match status" value="2"/>
</dbReference>
<dbReference type="HAMAP" id="MF_00210">
    <property type="entry name" value="EPSP_synth"/>
    <property type="match status" value="1"/>
</dbReference>
<dbReference type="InterPro" id="IPR001986">
    <property type="entry name" value="Enolpyruvate_Tfrase_dom"/>
</dbReference>
<dbReference type="InterPro" id="IPR036968">
    <property type="entry name" value="Enolpyruvate_Tfrase_sf"/>
</dbReference>
<dbReference type="InterPro" id="IPR006264">
    <property type="entry name" value="EPSP_synthase"/>
</dbReference>
<dbReference type="InterPro" id="IPR023193">
    <property type="entry name" value="EPSP_synthase_CS"/>
</dbReference>
<dbReference type="InterPro" id="IPR013792">
    <property type="entry name" value="RNA3'P_cycl/enolpyr_Trfase_a/b"/>
</dbReference>
<dbReference type="NCBIfam" id="TIGR01356">
    <property type="entry name" value="aroA"/>
    <property type="match status" value="1"/>
</dbReference>
<dbReference type="PANTHER" id="PTHR21090">
    <property type="entry name" value="AROM/DEHYDROQUINATE SYNTHASE"/>
    <property type="match status" value="1"/>
</dbReference>
<dbReference type="PANTHER" id="PTHR21090:SF5">
    <property type="entry name" value="PENTAFUNCTIONAL AROM POLYPEPTIDE"/>
    <property type="match status" value="1"/>
</dbReference>
<dbReference type="Pfam" id="PF00275">
    <property type="entry name" value="EPSP_synthase"/>
    <property type="match status" value="1"/>
</dbReference>
<dbReference type="PIRSF" id="PIRSF000505">
    <property type="entry name" value="EPSPS"/>
    <property type="match status" value="1"/>
</dbReference>
<dbReference type="SUPFAM" id="SSF55205">
    <property type="entry name" value="EPT/RTPC-like"/>
    <property type="match status" value="1"/>
</dbReference>
<dbReference type="PROSITE" id="PS00104">
    <property type="entry name" value="EPSP_SYNTHASE_1"/>
    <property type="match status" value="1"/>
</dbReference>
<dbReference type="PROSITE" id="PS00885">
    <property type="entry name" value="EPSP_SYNTHASE_2"/>
    <property type="match status" value="1"/>
</dbReference>
<keyword id="KW-0028">Amino-acid biosynthesis</keyword>
<keyword id="KW-0057">Aromatic amino acid biosynthesis</keyword>
<keyword id="KW-0963">Cytoplasm</keyword>
<keyword id="KW-1185">Reference proteome</keyword>
<keyword id="KW-0808">Transferase</keyword>
<name>AROA_GEOKA</name>
<reference key="1">
    <citation type="journal article" date="2004" name="Nucleic Acids Res.">
        <title>Thermoadaptation trait revealed by the genome sequence of thermophilic Geobacillus kaustophilus.</title>
        <authorList>
            <person name="Takami H."/>
            <person name="Takaki Y."/>
            <person name="Chee G.-J."/>
            <person name="Nishi S."/>
            <person name="Shimamura S."/>
            <person name="Suzuki H."/>
            <person name="Matsui S."/>
            <person name="Uchiyama I."/>
        </authorList>
    </citation>
    <scope>NUCLEOTIDE SEQUENCE [LARGE SCALE GENOMIC DNA]</scope>
    <source>
        <strain>HTA426</strain>
    </source>
</reference>
<gene>
    <name evidence="1" type="primary">aroA</name>
    <name type="ordered locus">GK2196</name>
</gene>
<protein>
    <recommendedName>
        <fullName evidence="1">3-phosphoshikimate 1-carboxyvinyltransferase</fullName>
        <ecNumber evidence="1">2.5.1.19</ecNumber>
    </recommendedName>
    <alternativeName>
        <fullName evidence="1">5-enolpyruvylshikimate-3-phosphate synthase</fullName>
        <shortName evidence="1">EPSP synthase</shortName>
        <shortName evidence="1">EPSPS</shortName>
    </alternativeName>
</protein>
<proteinExistence type="inferred from homology"/>
<evidence type="ECO:0000255" key="1">
    <source>
        <dbReference type="HAMAP-Rule" id="MF_00210"/>
    </source>
</evidence>